<keyword id="KW-1185">Reference proteome</keyword>
<keyword id="KW-0687">Ribonucleoprotein</keyword>
<keyword id="KW-0689">Ribosomal protein</keyword>
<keyword id="KW-0694">RNA-binding</keyword>
<keyword id="KW-0699">rRNA-binding</keyword>
<proteinExistence type="inferred from homology"/>
<feature type="chain" id="PRO_1000144004" description="Large ribosomal subunit protein uL6">
    <location>
        <begin position="1"/>
        <end position="178"/>
    </location>
</feature>
<organism>
    <name type="scientific">Kocuria rhizophila (strain ATCC 9341 / DSM 348 / NBRC 103217 / DC2201)</name>
    <dbReference type="NCBI Taxonomy" id="378753"/>
    <lineage>
        <taxon>Bacteria</taxon>
        <taxon>Bacillati</taxon>
        <taxon>Actinomycetota</taxon>
        <taxon>Actinomycetes</taxon>
        <taxon>Micrococcales</taxon>
        <taxon>Micrococcaceae</taxon>
        <taxon>Kocuria</taxon>
    </lineage>
</organism>
<gene>
    <name evidence="1" type="primary">rplF</name>
    <name type="ordered locus">KRH_06300</name>
</gene>
<dbReference type="EMBL" id="AP009152">
    <property type="protein sequence ID" value="BAG28977.1"/>
    <property type="molecule type" value="Genomic_DNA"/>
</dbReference>
<dbReference type="RefSeq" id="WP_012397702.1">
    <property type="nucleotide sequence ID" value="NC_010617.1"/>
</dbReference>
<dbReference type="SMR" id="B2GJ07"/>
<dbReference type="STRING" id="378753.KRH_06300"/>
<dbReference type="KEGG" id="krh:KRH_06300"/>
<dbReference type="eggNOG" id="COG0097">
    <property type="taxonomic scope" value="Bacteria"/>
</dbReference>
<dbReference type="HOGENOM" id="CLU_065464_1_2_11"/>
<dbReference type="OrthoDB" id="9805007at2"/>
<dbReference type="Proteomes" id="UP000008838">
    <property type="component" value="Chromosome"/>
</dbReference>
<dbReference type="GO" id="GO:0022625">
    <property type="term" value="C:cytosolic large ribosomal subunit"/>
    <property type="evidence" value="ECO:0007669"/>
    <property type="project" value="TreeGrafter"/>
</dbReference>
<dbReference type="GO" id="GO:0019843">
    <property type="term" value="F:rRNA binding"/>
    <property type="evidence" value="ECO:0007669"/>
    <property type="project" value="UniProtKB-UniRule"/>
</dbReference>
<dbReference type="GO" id="GO:0003735">
    <property type="term" value="F:structural constituent of ribosome"/>
    <property type="evidence" value="ECO:0007669"/>
    <property type="project" value="InterPro"/>
</dbReference>
<dbReference type="GO" id="GO:0002181">
    <property type="term" value="P:cytoplasmic translation"/>
    <property type="evidence" value="ECO:0007669"/>
    <property type="project" value="TreeGrafter"/>
</dbReference>
<dbReference type="FunFam" id="3.90.930.12:FF:000001">
    <property type="entry name" value="50S ribosomal protein L6"/>
    <property type="match status" value="1"/>
</dbReference>
<dbReference type="FunFam" id="3.90.930.12:FF:000002">
    <property type="entry name" value="50S ribosomal protein L6"/>
    <property type="match status" value="1"/>
</dbReference>
<dbReference type="Gene3D" id="3.90.930.12">
    <property type="entry name" value="Ribosomal protein L6, alpha-beta domain"/>
    <property type="match status" value="2"/>
</dbReference>
<dbReference type="HAMAP" id="MF_01365_B">
    <property type="entry name" value="Ribosomal_uL6_B"/>
    <property type="match status" value="1"/>
</dbReference>
<dbReference type="InterPro" id="IPR000702">
    <property type="entry name" value="Ribosomal_uL6-like"/>
</dbReference>
<dbReference type="InterPro" id="IPR036789">
    <property type="entry name" value="Ribosomal_uL6-like_a/b-dom_sf"/>
</dbReference>
<dbReference type="InterPro" id="IPR020040">
    <property type="entry name" value="Ribosomal_uL6_a/b-dom"/>
</dbReference>
<dbReference type="InterPro" id="IPR019906">
    <property type="entry name" value="Ribosomal_uL6_bac-type"/>
</dbReference>
<dbReference type="InterPro" id="IPR002358">
    <property type="entry name" value="Ribosomal_uL6_CS"/>
</dbReference>
<dbReference type="NCBIfam" id="TIGR03654">
    <property type="entry name" value="L6_bact"/>
    <property type="match status" value="1"/>
</dbReference>
<dbReference type="PANTHER" id="PTHR11655">
    <property type="entry name" value="60S/50S RIBOSOMAL PROTEIN L6/L9"/>
    <property type="match status" value="1"/>
</dbReference>
<dbReference type="PANTHER" id="PTHR11655:SF14">
    <property type="entry name" value="LARGE RIBOSOMAL SUBUNIT PROTEIN UL6M"/>
    <property type="match status" value="1"/>
</dbReference>
<dbReference type="Pfam" id="PF00347">
    <property type="entry name" value="Ribosomal_L6"/>
    <property type="match status" value="2"/>
</dbReference>
<dbReference type="PIRSF" id="PIRSF002162">
    <property type="entry name" value="Ribosomal_L6"/>
    <property type="match status" value="1"/>
</dbReference>
<dbReference type="PRINTS" id="PR00059">
    <property type="entry name" value="RIBOSOMALL6"/>
</dbReference>
<dbReference type="SUPFAM" id="SSF56053">
    <property type="entry name" value="Ribosomal protein L6"/>
    <property type="match status" value="2"/>
</dbReference>
<dbReference type="PROSITE" id="PS00525">
    <property type="entry name" value="RIBOSOMAL_L6_1"/>
    <property type="match status" value="1"/>
</dbReference>
<comment type="function">
    <text evidence="1">This protein binds to the 23S rRNA, and is important in its secondary structure. It is located near the subunit interface in the base of the L7/L12 stalk, and near the tRNA binding site of the peptidyltransferase center.</text>
</comment>
<comment type="subunit">
    <text evidence="1">Part of the 50S ribosomal subunit.</text>
</comment>
<comment type="similarity">
    <text evidence="1">Belongs to the universal ribosomal protein uL6 family.</text>
</comment>
<sequence>MSRIGRLPISVPAGVEVSVDGSAVSVKGPKGTLTHTVSAPITVVVEDGTVQVSRPNDERESRSLHGLTRSLIANMIQGVSEGYTKQLEIVGTGYRVQAKGADLEFALGYSHPVPFSAPDGITLSVEGNNKVTVSGIDKQQVGQVAAKIRSLRLPDPYKGKGVRYAGEQIRRKAGKAGK</sequence>
<accession>B2GJ07</accession>
<protein>
    <recommendedName>
        <fullName evidence="1">Large ribosomal subunit protein uL6</fullName>
    </recommendedName>
    <alternativeName>
        <fullName evidence="2">50S ribosomal protein L6</fullName>
    </alternativeName>
</protein>
<evidence type="ECO:0000255" key="1">
    <source>
        <dbReference type="HAMAP-Rule" id="MF_01365"/>
    </source>
</evidence>
<evidence type="ECO:0000305" key="2"/>
<reference key="1">
    <citation type="journal article" date="2008" name="J. Bacteriol.">
        <title>Complete genome sequence of the soil actinomycete Kocuria rhizophila.</title>
        <authorList>
            <person name="Takarada H."/>
            <person name="Sekine M."/>
            <person name="Kosugi H."/>
            <person name="Matsuo Y."/>
            <person name="Fujisawa T."/>
            <person name="Omata S."/>
            <person name="Kishi E."/>
            <person name="Shimizu A."/>
            <person name="Tsukatani N."/>
            <person name="Tanikawa S."/>
            <person name="Fujita N."/>
            <person name="Harayama S."/>
        </authorList>
    </citation>
    <scope>NUCLEOTIDE SEQUENCE [LARGE SCALE GENOMIC DNA]</scope>
    <source>
        <strain>ATCC 9341 / DSM 348 / NBRC 103217 / DC2201</strain>
    </source>
</reference>
<name>RL6_KOCRD</name>